<evidence type="ECO:0000255" key="1">
    <source>
        <dbReference type="HAMAP-Rule" id="MF_00022"/>
    </source>
</evidence>
<gene>
    <name evidence="1" type="primary">gltX</name>
    <name type="ordered locus">YPK_1437</name>
</gene>
<accession>B1JFZ4</accession>
<sequence>MKIKTRFAPSPTGYLHVGGARTALYSWLFSRHLGGEFVLRIEDTDLERSTQEAIDAIMDGMNWLNLDWDEGPYFQTKRFDRYNAVIDQMLDAGTAYRCYCSKERLEALREAQMANGEKPRYDGHCRDSQCTHGADEPSVVRFRNPQEGSVIFDDKIRGPIEFSNQELDDLIIRRTDGSPTYNFCVVIDDWDMEITHVIRGEDHINNTPRQINILKALGAPVPEYAHVSMILGDDGKKLSKRHGAVGVMQYRDDGYLPEALLNYLVRLGWSHGDQEIFSIEEMTQLFTLDAVSKSASAFNTEKLQWLNHHYINSLPPEQVAVHLSWHVEQLGIDTRNGPELVEIVKLLGERCKTLKEMAESCRYFYEEFDAFDVDAAKKHLRPVARQPLEAVKVKLAAITEWTTENVHNAIQGTADELGVGMGKVGMPLRVAVTGVGQSPGMDVTVHAIGQARTLARIDKALAFISEREAQQ</sequence>
<proteinExistence type="inferred from homology"/>
<comment type="function">
    <text evidence="1">Catalyzes the attachment of glutamate to tRNA(Glu) in a two-step reaction: glutamate is first activated by ATP to form Glu-AMP and then transferred to the acceptor end of tRNA(Glu).</text>
</comment>
<comment type="catalytic activity">
    <reaction evidence="1">
        <text>tRNA(Glu) + L-glutamate + ATP = L-glutamyl-tRNA(Glu) + AMP + diphosphate</text>
        <dbReference type="Rhea" id="RHEA:23540"/>
        <dbReference type="Rhea" id="RHEA-COMP:9663"/>
        <dbReference type="Rhea" id="RHEA-COMP:9680"/>
        <dbReference type="ChEBI" id="CHEBI:29985"/>
        <dbReference type="ChEBI" id="CHEBI:30616"/>
        <dbReference type="ChEBI" id="CHEBI:33019"/>
        <dbReference type="ChEBI" id="CHEBI:78442"/>
        <dbReference type="ChEBI" id="CHEBI:78520"/>
        <dbReference type="ChEBI" id="CHEBI:456215"/>
        <dbReference type="EC" id="6.1.1.17"/>
    </reaction>
</comment>
<comment type="cofactor">
    <cofactor evidence="1">
        <name>Zn(2+)</name>
        <dbReference type="ChEBI" id="CHEBI:29105"/>
    </cofactor>
    <text evidence="1">Binds 1 zinc ion per subunit.</text>
</comment>
<comment type="subunit">
    <text evidence="1">Monomer.</text>
</comment>
<comment type="subcellular location">
    <subcellularLocation>
        <location evidence="1">Cytoplasm</location>
    </subcellularLocation>
</comment>
<comment type="similarity">
    <text evidence="1">Belongs to the class-I aminoacyl-tRNA synthetase family. Glutamate--tRNA ligase type 1 subfamily.</text>
</comment>
<organism>
    <name type="scientific">Yersinia pseudotuberculosis serotype O:3 (strain YPIII)</name>
    <dbReference type="NCBI Taxonomy" id="502800"/>
    <lineage>
        <taxon>Bacteria</taxon>
        <taxon>Pseudomonadati</taxon>
        <taxon>Pseudomonadota</taxon>
        <taxon>Gammaproteobacteria</taxon>
        <taxon>Enterobacterales</taxon>
        <taxon>Yersiniaceae</taxon>
        <taxon>Yersinia</taxon>
    </lineage>
</organism>
<reference key="1">
    <citation type="submission" date="2008-02" db="EMBL/GenBank/DDBJ databases">
        <title>Complete sequence of Yersinia pseudotuberculosis YPIII.</title>
        <authorList>
            <consortium name="US DOE Joint Genome Institute"/>
            <person name="Copeland A."/>
            <person name="Lucas S."/>
            <person name="Lapidus A."/>
            <person name="Glavina del Rio T."/>
            <person name="Dalin E."/>
            <person name="Tice H."/>
            <person name="Bruce D."/>
            <person name="Goodwin L."/>
            <person name="Pitluck S."/>
            <person name="Munk A.C."/>
            <person name="Brettin T."/>
            <person name="Detter J.C."/>
            <person name="Han C."/>
            <person name="Tapia R."/>
            <person name="Schmutz J."/>
            <person name="Larimer F."/>
            <person name="Land M."/>
            <person name="Hauser L."/>
            <person name="Challacombe J.F."/>
            <person name="Green L."/>
            <person name="Lindler L.E."/>
            <person name="Nikolich M.P."/>
            <person name="Richardson P."/>
        </authorList>
    </citation>
    <scope>NUCLEOTIDE SEQUENCE [LARGE SCALE GENOMIC DNA]</scope>
    <source>
        <strain>YPIII</strain>
    </source>
</reference>
<feature type="chain" id="PRO_1000090128" description="Glutamate--tRNA ligase">
    <location>
        <begin position="1"/>
        <end position="471"/>
    </location>
</feature>
<feature type="short sequence motif" description="'HIGH' region" evidence="1">
    <location>
        <begin position="9"/>
        <end position="19"/>
    </location>
</feature>
<feature type="short sequence motif" description="'KMSKS' region" evidence="1">
    <location>
        <begin position="237"/>
        <end position="241"/>
    </location>
</feature>
<feature type="binding site" evidence="1">
    <location>
        <position position="98"/>
    </location>
    <ligand>
        <name>Zn(2+)</name>
        <dbReference type="ChEBI" id="CHEBI:29105"/>
    </ligand>
</feature>
<feature type="binding site" evidence="1">
    <location>
        <position position="100"/>
    </location>
    <ligand>
        <name>Zn(2+)</name>
        <dbReference type="ChEBI" id="CHEBI:29105"/>
    </ligand>
</feature>
<feature type="binding site" evidence="1">
    <location>
        <position position="125"/>
    </location>
    <ligand>
        <name>Zn(2+)</name>
        <dbReference type="ChEBI" id="CHEBI:29105"/>
    </ligand>
</feature>
<feature type="binding site" evidence="1">
    <location>
        <position position="127"/>
    </location>
    <ligand>
        <name>Zn(2+)</name>
        <dbReference type="ChEBI" id="CHEBI:29105"/>
    </ligand>
</feature>
<feature type="binding site" evidence="1">
    <location>
        <position position="240"/>
    </location>
    <ligand>
        <name>ATP</name>
        <dbReference type="ChEBI" id="CHEBI:30616"/>
    </ligand>
</feature>
<keyword id="KW-0030">Aminoacyl-tRNA synthetase</keyword>
<keyword id="KW-0067">ATP-binding</keyword>
<keyword id="KW-0963">Cytoplasm</keyword>
<keyword id="KW-0436">Ligase</keyword>
<keyword id="KW-0479">Metal-binding</keyword>
<keyword id="KW-0547">Nucleotide-binding</keyword>
<keyword id="KW-0648">Protein biosynthesis</keyword>
<keyword id="KW-0862">Zinc</keyword>
<protein>
    <recommendedName>
        <fullName evidence="1">Glutamate--tRNA ligase</fullName>
        <ecNumber evidence="1">6.1.1.17</ecNumber>
    </recommendedName>
    <alternativeName>
        <fullName evidence="1">Glutamyl-tRNA synthetase</fullName>
        <shortName evidence="1">GluRS</shortName>
    </alternativeName>
</protein>
<name>SYE_YERPY</name>
<dbReference type="EC" id="6.1.1.17" evidence="1"/>
<dbReference type="EMBL" id="CP000950">
    <property type="protein sequence ID" value="ACA67730.1"/>
    <property type="molecule type" value="Genomic_DNA"/>
</dbReference>
<dbReference type="RefSeq" id="WP_012104855.1">
    <property type="nucleotide sequence ID" value="NZ_CP009792.1"/>
</dbReference>
<dbReference type="SMR" id="B1JFZ4"/>
<dbReference type="KEGG" id="ypy:YPK_1437"/>
<dbReference type="PATRIC" id="fig|502800.11.peg.2074"/>
<dbReference type="GO" id="GO:0005829">
    <property type="term" value="C:cytosol"/>
    <property type="evidence" value="ECO:0007669"/>
    <property type="project" value="TreeGrafter"/>
</dbReference>
<dbReference type="GO" id="GO:0005524">
    <property type="term" value="F:ATP binding"/>
    <property type="evidence" value="ECO:0007669"/>
    <property type="project" value="UniProtKB-UniRule"/>
</dbReference>
<dbReference type="GO" id="GO:0004818">
    <property type="term" value="F:glutamate-tRNA ligase activity"/>
    <property type="evidence" value="ECO:0007669"/>
    <property type="project" value="UniProtKB-UniRule"/>
</dbReference>
<dbReference type="GO" id="GO:0000049">
    <property type="term" value="F:tRNA binding"/>
    <property type="evidence" value="ECO:0007669"/>
    <property type="project" value="InterPro"/>
</dbReference>
<dbReference type="GO" id="GO:0008270">
    <property type="term" value="F:zinc ion binding"/>
    <property type="evidence" value="ECO:0007669"/>
    <property type="project" value="UniProtKB-UniRule"/>
</dbReference>
<dbReference type="GO" id="GO:0006424">
    <property type="term" value="P:glutamyl-tRNA aminoacylation"/>
    <property type="evidence" value="ECO:0007669"/>
    <property type="project" value="UniProtKB-UniRule"/>
</dbReference>
<dbReference type="CDD" id="cd00808">
    <property type="entry name" value="GluRS_core"/>
    <property type="match status" value="1"/>
</dbReference>
<dbReference type="FunFam" id="1.10.10.350:FF:000001">
    <property type="entry name" value="Glutamate--tRNA ligase"/>
    <property type="match status" value="1"/>
</dbReference>
<dbReference type="FunFam" id="3.40.50.620:FF:000007">
    <property type="entry name" value="Glutamate--tRNA ligase"/>
    <property type="match status" value="1"/>
</dbReference>
<dbReference type="Gene3D" id="1.10.10.350">
    <property type="match status" value="1"/>
</dbReference>
<dbReference type="Gene3D" id="3.40.50.620">
    <property type="entry name" value="HUPs"/>
    <property type="match status" value="1"/>
</dbReference>
<dbReference type="HAMAP" id="MF_00022">
    <property type="entry name" value="Glu_tRNA_synth_type1"/>
    <property type="match status" value="1"/>
</dbReference>
<dbReference type="InterPro" id="IPR045462">
    <property type="entry name" value="aa-tRNA-synth_I_cd-bd"/>
</dbReference>
<dbReference type="InterPro" id="IPR020751">
    <property type="entry name" value="aa-tRNA-synth_I_codon-bd_sub2"/>
</dbReference>
<dbReference type="InterPro" id="IPR001412">
    <property type="entry name" value="aa-tRNA-synth_I_CS"/>
</dbReference>
<dbReference type="InterPro" id="IPR008925">
    <property type="entry name" value="aa_tRNA-synth_I_cd-bd_sf"/>
</dbReference>
<dbReference type="InterPro" id="IPR004527">
    <property type="entry name" value="Glu-tRNA-ligase_bac/mito"/>
</dbReference>
<dbReference type="InterPro" id="IPR000924">
    <property type="entry name" value="Glu/Gln-tRNA-synth"/>
</dbReference>
<dbReference type="InterPro" id="IPR020058">
    <property type="entry name" value="Glu/Gln-tRNA-synth_Ib_cat-dom"/>
</dbReference>
<dbReference type="InterPro" id="IPR049940">
    <property type="entry name" value="GluQ/Sye"/>
</dbReference>
<dbReference type="InterPro" id="IPR033910">
    <property type="entry name" value="GluRS_core"/>
</dbReference>
<dbReference type="InterPro" id="IPR014729">
    <property type="entry name" value="Rossmann-like_a/b/a_fold"/>
</dbReference>
<dbReference type="NCBIfam" id="TIGR00464">
    <property type="entry name" value="gltX_bact"/>
    <property type="match status" value="1"/>
</dbReference>
<dbReference type="PANTHER" id="PTHR43311">
    <property type="entry name" value="GLUTAMATE--TRNA LIGASE"/>
    <property type="match status" value="1"/>
</dbReference>
<dbReference type="PANTHER" id="PTHR43311:SF2">
    <property type="entry name" value="GLUTAMATE--TRNA LIGASE, MITOCHONDRIAL-RELATED"/>
    <property type="match status" value="1"/>
</dbReference>
<dbReference type="Pfam" id="PF19269">
    <property type="entry name" value="Anticodon_2"/>
    <property type="match status" value="1"/>
</dbReference>
<dbReference type="Pfam" id="PF00749">
    <property type="entry name" value="tRNA-synt_1c"/>
    <property type="match status" value="1"/>
</dbReference>
<dbReference type="PRINTS" id="PR00987">
    <property type="entry name" value="TRNASYNTHGLU"/>
</dbReference>
<dbReference type="SUPFAM" id="SSF48163">
    <property type="entry name" value="An anticodon-binding domain of class I aminoacyl-tRNA synthetases"/>
    <property type="match status" value="1"/>
</dbReference>
<dbReference type="SUPFAM" id="SSF52374">
    <property type="entry name" value="Nucleotidylyl transferase"/>
    <property type="match status" value="1"/>
</dbReference>
<dbReference type="PROSITE" id="PS00178">
    <property type="entry name" value="AA_TRNA_LIGASE_I"/>
    <property type="match status" value="1"/>
</dbReference>